<accession>Q7ZYA5</accession>
<evidence type="ECO:0000250" key="1"/>
<evidence type="ECO:0000255" key="2">
    <source>
        <dbReference type="PROSITE-ProRule" id="PRU00266"/>
    </source>
</evidence>
<evidence type="ECO:0000256" key="3">
    <source>
        <dbReference type="SAM" id="MobiDB-lite"/>
    </source>
</evidence>
<evidence type="ECO:0000305" key="4"/>
<protein>
    <recommendedName>
        <fullName>Interferon-inducible double-stranded RNA-dependent protein kinase activator A homolog A</fullName>
    </recommendedName>
</protein>
<sequence>MSQERFPAAPKMSSEKPTSLDAMRATNPCETPIQLLHEFGTKTGNHPVYTLEKAEGQAHNPSFTFRLVIGDITSLGEGPSKKTAKQKAAEFALNILRGDTSKCLPVTDTLRDPKKPPNQMQENPVGSLQELAVQKGWRLPEYTVAQESGPPHKREFTITCRVETFVETGSGTSKQVAKRVAAEKLLTKFKTISTDNIPLNKLIGNKMGCTWDSMRNSSGEKISMLKRSPLSIPNTDYVKMLKDVAEELDFNLTYLDIDELSVNGQYQCLAELSTNPITVCHGTGISCGNAHNDAAHNALQYLKIMCIKK</sequence>
<organism>
    <name type="scientific">Xenopus laevis</name>
    <name type="common">African clawed frog</name>
    <dbReference type="NCBI Taxonomy" id="8355"/>
    <lineage>
        <taxon>Eukaryota</taxon>
        <taxon>Metazoa</taxon>
        <taxon>Chordata</taxon>
        <taxon>Craniata</taxon>
        <taxon>Vertebrata</taxon>
        <taxon>Euteleostomi</taxon>
        <taxon>Amphibia</taxon>
        <taxon>Batrachia</taxon>
        <taxon>Anura</taxon>
        <taxon>Pipoidea</taxon>
        <taxon>Pipidae</taxon>
        <taxon>Xenopodinae</taxon>
        <taxon>Xenopus</taxon>
        <taxon>Xenopus</taxon>
    </lineage>
</organism>
<name>PRKAA_XENLA</name>
<dbReference type="EMBL" id="BC043873">
    <property type="protein sequence ID" value="AAH43873.1"/>
    <property type="molecule type" value="mRNA"/>
</dbReference>
<dbReference type="RefSeq" id="NP_001079500.1">
    <property type="nucleotide sequence ID" value="NM_001086031.1"/>
</dbReference>
<dbReference type="SMR" id="Q7ZYA5"/>
<dbReference type="BioGRID" id="97430">
    <property type="interactions" value="4"/>
</dbReference>
<dbReference type="DNASU" id="379187"/>
<dbReference type="GeneID" id="379187"/>
<dbReference type="KEGG" id="xla:379187"/>
<dbReference type="AGR" id="Xenbase:XB-GENE-940708"/>
<dbReference type="CTD" id="379187"/>
<dbReference type="Xenbase" id="XB-GENE-940708">
    <property type="gene designation" value="prkra.L"/>
</dbReference>
<dbReference type="OMA" id="PEYEFEK"/>
<dbReference type="OrthoDB" id="10056847at2759"/>
<dbReference type="CD-CODE" id="78E86D56">
    <property type="entry name" value="Mitochondrial cloud"/>
</dbReference>
<dbReference type="Proteomes" id="UP000186698">
    <property type="component" value="Chromosome 9_10L"/>
</dbReference>
<dbReference type="Bgee" id="379187">
    <property type="expression patterns" value="Expressed in egg cell and 19 other cell types or tissues"/>
</dbReference>
<dbReference type="GO" id="GO:0005737">
    <property type="term" value="C:cytoplasm"/>
    <property type="evidence" value="ECO:0000250"/>
    <property type="project" value="UniProtKB"/>
</dbReference>
<dbReference type="GO" id="GO:0005634">
    <property type="term" value="C:nucleus"/>
    <property type="evidence" value="ECO:0000318"/>
    <property type="project" value="GO_Central"/>
</dbReference>
<dbReference type="GO" id="GO:0048471">
    <property type="term" value="C:perinuclear region of cytoplasm"/>
    <property type="evidence" value="ECO:0007669"/>
    <property type="project" value="UniProtKB-SubCell"/>
</dbReference>
<dbReference type="GO" id="GO:0016442">
    <property type="term" value="C:RISC complex"/>
    <property type="evidence" value="ECO:0000318"/>
    <property type="project" value="GO_Central"/>
</dbReference>
<dbReference type="GO" id="GO:0070578">
    <property type="term" value="C:RISC-loading complex"/>
    <property type="evidence" value="ECO:0000318"/>
    <property type="project" value="GO_Central"/>
</dbReference>
<dbReference type="GO" id="GO:0003725">
    <property type="term" value="F:double-stranded RNA binding"/>
    <property type="evidence" value="ECO:0000318"/>
    <property type="project" value="GO_Central"/>
</dbReference>
<dbReference type="GO" id="GO:0035197">
    <property type="term" value="F:siRNA binding"/>
    <property type="evidence" value="ECO:0000318"/>
    <property type="project" value="GO_Central"/>
</dbReference>
<dbReference type="GO" id="GO:0070920">
    <property type="term" value="P:regulation of regulatory ncRNA processing"/>
    <property type="evidence" value="ECO:0000318"/>
    <property type="project" value="GO_Central"/>
</dbReference>
<dbReference type="GO" id="GO:0030422">
    <property type="term" value="P:siRNA processing"/>
    <property type="evidence" value="ECO:0000250"/>
    <property type="project" value="UniProtKB"/>
</dbReference>
<dbReference type="CDD" id="cd19889">
    <property type="entry name" value="DSRM_PRKRA_rpt1"/>
    <property type="match status" value="1"/>
</dbReference>
<dbReference type="CDD" id="cd19891">
    <property type="entry name" value="DSRM_PRKRA_rpt2"/>
    <property type="match status" value="1"/>
</dbReference>
<dbReference type="CDD" id="cd19892">
    <property type="entry name" value="DSRM_PRKRA_rpt3"/>
    <property type="match status" value="1"/>
</dbReference>
<dbReference type="FunFam" id="3.30.160.20:FF:000005">
    <property type="entry name" value="Putative double-stranded RNA-specific adenosine deaminase"/>
    <property type="match status" value="1"/>
</dbReference>
<dbReference type="FunFam" id="3.30.160.20:FF:000019">
    <property type="entry name" value="RISC-loading complex subunit TARBP2"/>
    <property type="match status" value="1"/>
</dbReference>
<dbReference type="FunFam" id="3.30.160.20:FF:000018">
    <property type="entry name" value="RISC-loading complex subunit TARBP2 isoform X3"/>
    <property type="match status" value="1"/>
</dbReference>
<dbReference type="Gene3D" id="3.30.160.20">
    <property type="match status" value="3"/>
</dbReference>
<dbReference type="InterPro" id="IPR014720">
    <property type="entry name" value="dsRBD_dom"/>
</dbReference>
<dbReference type="InterPro" id="IPR044465">
    <property type="entry name" value="PRKRA_DSRM_1"/>
</dbReference>
<dbReference type="InterPro" id="IPR044466">
    <property type="entry name" value="PRKRA_DSRM_2"/>
</dbReference>
<dbReference type="InterPro" id="IPR044467">
    <property type="entry name" value="PRKRA_DSRM_3"/>
</dbReference>
<dbReference type="InterPro" id="IPR051247">
    <property type="entry name" value="RLC_Component"/>
</dbReference>
<dbReference type="PANTHER" id="PTHR46205:SF2">
    <property type="entry name" value="INTERFERON-INDUCIBLE DOUBLE-STRANDED RNA-DEPENDENT PROTEIN KINASE ACTIVATOR A"/>
    <property type="match status" value="1"/>
</dbReference>
<dbReference type="PANTHER" id="PTHR46205">
    <property type="entry name" value="LOQUACIOUS, ISOFORM B"/>
    <property type="match status" value="1"/>
</dbReference>
<dbReference type="Pfam" id="PF00035">
    <property type="entry name" value="dsrm"/>
    <property type="match status" value="2"/>
</dbReference>
<dbReference type="SMART" id="SM00358">
    <property type="entry name" value="DSRM"/>
    <property type="match status" value="3"/>
</dbReference>
<dbReference type="SUPFAM" id="SSF54768">
    <property type="entry name" value="dsRNA-binding domain-like"/>
    <property type="match status" value="3"/>
</dbReference>
<dbReference type="PROSITE" id="PS50137">
    <property type="entry name" value="DS_RBD"/>
    <property type="match status" value="3"/>
</dbReference>
<proteinExistence type="evidence at transcript level"/>
<reference key="1">
    <citation type="submission" date="2003-01" db="EMBL/GenBank/DDBJ databases">
        <authorList>
            <consortium name="NIH - Xenopus Gene Collection (XGC) project"/>
        </authorList>
    </citation>
    <scope>NUCLEOTIDE SEQUENCE [LARGE SCALE MRNA]</scope>
    <source>
        <tissue>Embryo</tissue>
    </source>
</reference>
<comment type="function">
    <text evidence="1">Activates eif2ak2/pkr in the absence of double-stranded RNA (dsRNA), leading to phosphorylation of eif2s1/efi2-alpha and inhibition of translation and induction of apoptosis. Required for siRNA production by dicer1 and for subsequent siRNA-mediated post-transcriptional gene silencing. Does not seem to be required for processing of pre-miRNA to miRNA by dicer1 (By similarity).</text>
</comment>
<comment type="subunit">
    <text evidence="1">Homodimer. Interacts with dicer1 and eif2ak2/pkr. Also able to interact with dsRNA (By similarity).</text>
</comment>
<comment type="subcellular location">
    <subcellularLocation>
        <location evidence="1">Cytoplasm</location>
        <location evidence="1">Perinuclear region</location>
    </subcellularLocation>
    <subcellularLocation>
        <location evidence="1">Nucleus</location>
    </subcellularLocation>
</comment>
<comment type="similarity">
    <text evidence="4">Belongs to the PRKRA family.</text>
</comment>
<feature type="chain" id="PRO_0000223612" description="Interferon-inducible double-stranded RNA-dependent protein kinase activator A homolog A">
    <location>
        <begin position="1"/>
        <end position="309"/>
    </location>
</feature>
<feature type="domain" description="DRBM 1" evidence="2">
    <location>
        <begin position="31"/>
        <end position="98"/>
    </location>
</feature>
<feature type="domain" description="DRBM 2" evidence="2">
    <location>
        <begin position="123"/>
        <end position="191"/>
    </location>
</feature>
<feature type="domain" description="DRBM 3" evidence="2">
    <location>
        <begin position="236"/>
        <end position="304"/>
    </location>
</feature>
<feature type="region of interest" description="Disordered" evidence="3">
    <location>
        <begin position="1"/>
        <end position="22"/>
    </location>
</feature>
<keyword id="KW-0963">Cytoplasm</keyword>
<keyword id="KW-0539">Nucleus</keyword>
<keyword id="KW-1185">Reference proteome</keyword>
<keyword id="KW-0677">Repeat</keyword>
<keyword id="KW-0694">RNA-binding</keyword>
<keyword id="KW-0943">RNA-mediated gene silencing</keyword>
<gene>
    <name type="primary">prkra-a</name>
    <name type="synonym">prkra</name>
</gene>